<dbReference type="EC" id="3.4.-.-" evidence="6"/>
<dbReference type="EMBL" id="FM992689">
    <property type="protein sequence ID" value="CAX44231.1"/>
    <property type="molecule type" value="Genomic_DNA"/>
</dbReference>
<dbReference type="RefSeq" id="XP_002418923.1">
    <property type="nucleotide sequence ID" value="XM_002418878.1"/>
</dbReference>
<dbReference type="SMR" id="B9WCV6"/>
<dbReference type="GeneID" id="8046559"/>
<dbReference type="KEGG" id="cdu:CD36_24500"/>
<dbReference type="CGD" id="CAL0000166311">
    <property type="gene designation" value="Cd36_24500"/>
</dbReference>
<dbReference type="VEuPathDB" id="FungiDB:CD36_24500"/>
<dbReference type="eggNOG" id="KOG2194">
    <property type="taxonomic scope" value="Eukaryota"/>
</dbReference>
<dbReference type="HOGENOM" id="CLU_006412_1_0_1"/>
<dbReference type="OrthoDB" id="76293at2759"/>
<dbReference type="Proteomes" id="UP000002605">
    <property type="component" value="Chromosome 2"/>
</dbReference>
<dbReference type="GO" id="GO:0005774">
    <property type="term" value="C:vacuolar membrane"/>
    <property type="evidence" value="ECO:0007669"/>
    <property type="project" value="UniProtKB-SubCell"/>
</dbReference>
<dbReference type="GO" id="GO:0046872">
    <property type="term" value="F:metal ion binding"/>
    <property type="evidence" value="ECO:0007669"/>
    <property type="project" value="UniProtKB-KW"/>
</dbReference>
<dbReference type="GO" id="GO:0008235">
    <property type="term" value="F:metalloexopeptidase activity"/>
    <property type="evidence" value="ECO:0007669"/>
    <property type="project" value="InterPro"/>
</dbReference>
<dbReference type="GO" id="GO:0006508">
    <property type="term" value="P:proteolysis"/>
    <property type="evidence" value="ECO:0007669"/>
    <property type="project" value="UniProtKB-KW"/>
</dbReference>
<dbReference type="CDD" id="cd03875">
    <property type="entry name" value="M28_Fxna_like"/>
    <property type="match status" value="1"/>
</dbReference>
<dbReference type="FunFam" id="3.40.630.10:FF:000057">
    <property type="entry name" value="Vacuolar membrane protease"/>
    <property type="match status" value="1"/>
</dbReference>
<dbReference type="Gene3D" id="3.40.630.10">
    <property type="entry name" value="Zn peptidases"/>
    <property type="match status" value="1"/>
</dbReference>
<dbReference type="InterPro" id="IPR048024">
    <property type="entry name" value="Fxna-like_M28_dom"/>
</dbReference>
<dbReference type="InterPro" id="IPR045175">
    <property type="entry name" value="M28_fam"/>
</dbReference>
<dbReference type="InterPro" id="IPR007484">
    <property type="entry name" value="Peptidase_M28"/>
</dbReference>
<dbReference type="InterPro" id="IPR053975">
    <property type="entry name" value="PFF1_C"/>
</dbReference>
<dbReference type="InterPro" id="IPR053976">
    <property type="entry name" value="PFF1_TM"/>
</dbReference>
<dbReference type="PANTHER" id="PTHR12147">
    <property type="entry name" value="METALLOPEPTIDASE M28 FAMILY MEMBER"/>
    <property type="match status" value="1"/>
</dbReference>
<dbReference type="PANTHER" id="PTHR12147:SF58">
    <property type="entry name" value="VACUOLAR MEMBRANE PROTEASE"/>
    <property type="match status" value="1"/>
</dbReference>
<dbReference type="Pfam" id="PF04389">
    <property type="entry name" value="Peptidase_M28"/>
    <property type="match status" value="1"/>
</dbReference>
<dbReference type="Pfam" id="PF22250">
    <property type="entry name" value="PFF1_C"/>
    <property type="match status" value="1"/>
</dbReference>
<dbReference type="Pfam" id="PF22251">
    <property type="entry name" value="PFF1_TM"/>
    <property type="match status" value="2"/>
</dbReference>
<dbReference type="SUPFAM" id="SSF53187">
    <property type="entry name" value="Zn-dependent exopeptidases"/>
    <property type="match status" value="1"/>
</dbReference>
<feature type="chain" id="PRO_0000411707" description="Vacuolar membrane protease">
    <location>
        <begin position="1"/>
        <end position="930"/>
    </location>
</feature>
<feature type="topological domain" description="Cytoplasmic" evidence="1">
    <location>
        <begin position="1"/>
        <end position="49"/>
    </location>
</feature>
<feature type="transmembrane region" description="Helical; Name=1" evidence="3">
    <location>
        <begin position="50"/>
        <end position="70"/>
    </location>
</feature>
<feature type="topological domain" description="Vacuolar" evidence="1">
    <location>
        <begin position="71"/>
        <end position="379"/>
    </location>
</feature>
<feature type="transmembrane region" description="Helical; Name=2" evidence="3">
    <location>
        <begin position="380"/>
        <end position="400"/>
    </location>
</feature>
<feature type="topological domain" description="Cytoplasmic" evidence="1">
    <location>
        <begin position="401"/>
        <end position="411"/>
    </location>
</feature>
<feature type="transmembrane region" description="Helical; Name=3" evidence="3">
    <location>
        <begin position="412"/>
        <end position="432"/>
    </location>
</feature>
<feature type="topological domain" description="Vacuolar" evidence="1">
    <location>
        <begin position="433"/>
        <end position="449"/>
    </location>
</feature>
<feature type="transmembrane region" description="Helical; Name=4" evidence="3">
    <location>
        <begin position="450"/>
        <end position="470"/>
    </location>
</feature>
<feature type="topological domain" description="Cytoplasmic" evidence="1">
    <location>
        <begin position="471"/>
        <end position="480"/>
    </location>
</feature>
<feature type="transmembrane region" description="Helical; Name=5" evidence="3">
    <location>
        <begin position="481"/>
        <end position="501"/>
    </location>
</feature>
<feature type="topological domain" description="Vacuolar" evidence="1">
    <location>
        <begin position="502"/>
        <end position="514"/>
    </location>
</feature>
<feature type="transmembrane region" description="Helical; Name=6" evidence="3">
    <location>
        <begin position="515"/>
        <end position="535"/>
    </location>
</feature>
<feature type="topological domain" description="Cytoplasmic" evidence="1">
    <location>
        <begin position="536"/>
        <end position="598"/>
    </location>
</feature>
<feature type="transmembrane region" description="Helical; Name=7" evidence="3">
    <location>
        <begin position="599"/>
        <end position="619"/>
    </location>
</feature>
<feature type="topological domain" description="Vacuolar" evidence="1">
    <location>
        <begin position="620"/>
        <end position="631"/>
    </location>
</feature>
<feature type="transmembrane region" description="Helical; Name=8" evidence="3">
    <location>
        <begin position="632"/>
        <end position="652"/>
    </location>
</feature>
<feature type="topological domain" description="Cytoplasmic" evidence="1">
    <location>
        <begin position="653"/>
        <end position="657"/>
    </location>
</feature>
<feature type="transmembrane region" description="Helical; Name=9" evidence="3">
    <location>
        <begin position="658"/>
        <end position="678"/>
    </location>
</feature>
<feature type="topological domain" description="Vacuolar" evidence="1">
    <location>
        <begin position="679"/>
        <end position="930"/>
    </location>
</feature>
<feature type="region of interest" description="Disordered" evidence="5">
    <location>
        <begin position="1"/>
        <end position="28"/>
    </location>
</feature>
<feature type="region of interest" description="Disordered" evidence="5">
    <location>
        <begin position="542"/>
        <end position="570"/>
    </location>
</feature>
<feature type="active site" description="Proton acceptor" evidence="2">
    <location>
        <position position="222"/>
    </location>
</feature>
<feature type="binding site" evidence="2">
    <location>
        <position position="177"/>
    </location>
    <ligand>
        <name>Zn(2+)</name>
        <dbReference type="ChEBI" id="CHEBI:29105"/>
        <label>1</label>
        <note>catalytic</note>
    </ligand>
</feature>
<feature type="binding site" evidence="2">
    <location>
        <position position="189"/>
    </location>
    <ligand>
        <name>Zn(2+)</name>
        <dbReference type="ChEBI" id="CHEBI:29105"/>
        <label>1</label>
        <note>catalytic</note>
    </ligand>
</feature>
<feature type="binding site" evidence="2">
    <location>
        <position position="189"/>
    </location>
    <ligand>
        <name>Zn(2+)</name>
        <dbReference type="ChEBI" id="CHEBI:29105"/>
        <label>2</label>
        <note>catalytic</note>
    </ligand>
</feature>
<feature type="binding site" evidence="2">
    <location>
        <position position="223"/>
    </location>
    <ligand>
        <name>Zn(2+)</name>
        <dbReference type="ChEBI" id="CHEBI:29105"/>
        <label>2</label>
        <note>catalytic</note>
    </ligand>
</feature>
<feature type="binding site" evidence="2">
    <location>
        <position position="248"/>
    </location>
    <ligand>
        <name>Zn(2+)</name>
        <dbReference type="ChEBI" id="CHEBI:29105"/>
        <label>1</label>
        <note>catalytic</note>
    </ligand>
</feature>
<feature type="binding site" evidence="2">
    <location>
        <position position="320"/>
    </location>
    <ligand>
        <name>Zn(2+)</name>
        <dbReference type="ChEBI" id="CHEBI:29105"/>
        <label>2</label>
        <note>catalytic</note>
    </ligand>
</feature>
<feature type="site" description="Transition state stabilizer" evidence="2">
    <location>
        <position position="319"/>
    </location>
</feature>
<feature type="glycosylation site" description="N-linked (GlcNAc...) asparagine" evidence="4">
    <location>
        <position position="163"/>
    </location>
</feature>
<feature type="glycosylation site" description="N-linked (GlcNAc...) asparagine" evidence="4">
    <location>
        <position position="354"/>
    </location>
</feature>
<feature type="glycosylation site" description="N-linked (GlcNAc...) asparagine" evidence="4">
    <location>
        <position position="620"/>
    </location>
</feature>
<feature type="glycosylation site" description="N-linked (GlcNAc...) asparagine" evidence="4">
    <location>
        <position position="697"/>
    </location>
</feature>
<feature type="glycosylation site" description="N-linked (GlcNAc...) asparagine" evidence="4">
    <location>
        <position position="768"/>
    </location>
</feature>
<feature type="glycosylation site" description="N-linked (GlcNAc...) asparagine" evidence="4">
    <location>
        <position position="808"/>
    </location>
</feature>
<feature type="glycosylation site" description="N-linked (GlcNAc...) asparagine" evidence="4">
    <location>
        <position position="890"/>
    </location>
</feature>
<evidence type="ECO:0000250" key="1">
    <source>
        <dbReference type="UniProtKB" id="P38244"/>
    </source>
</evidence>
<evidence type="ECO:0000250" key="2">
    <source>
        <dbReference type="UniProtKB" id="P80561"/>
    </source>
</evidence>
<evidence type="ECO:0000255" key="3"/>
<evidence type="ECO:0000255" key="4">
    <source>
        <dbReference type="PROSITE-ProRule" id="PRU00498"/>
    </source>
</evidence>
<evidence type="ECO:0000256" key="5">
    <source>
        <dbReference type="SAM" id="MobiDB-lite"/>
    </source>
</evidence>
<evidence type="ECO:0000305" key="6"/>
<name>PFF1_CANDC</name>
<comment type="function">
    <text evidence="1">May be involved in vacuolar sorting and osmoregulation.</text>
</comment>
<comment type="cofactor">
    <cofactor evidence="2">
        <name>Zn(2+)</name>
        <dbReference type="ChEBI" id="CHEBI:29105"/>
    </cofactor>
    <text evidence="2">Binds 2 Zn(2+) ions per subunit.</text>
</comment>
<comment type="subcellular location">
    <subcellularLocation>
        <location evidence="1">Vacuole membrane</location>
        <topology evidence="3">Multi-pass membrane protein</topology>
    </subcellularLocation>
</comment>
<comment type="similarity">
    <text evidence="6">Belongs to the peptidase M28 family.</text>
</comment>
<proteinExistence type="inferred from homology"/>
<accession>B9WCV6</accession>
<reference key="1">
    <citation type="journal article" date="2009" name="Genome Res.">
        <title>Comparative genomics of the fungal pathogens Candida dubliniensis and Candida albicans.</title>
        <authorList>
            <person name="Jackson A.P."/>
            <person name="Gamble J.A."/>
            <person name="Yeomans T."/>
            <person name="Moran G.P."/>
            <person name="Saunders D."/>
            <person name="Harris D."/>
            <person name="Aslett M."/>
            <person name="Barrell J.F."/>
            <person name="Butler G."/>
            <person name="Citiulo F."/>
            <person name="Coleman D.C."/>
            <person name="de Groot P.W.J."/>
            <person name="Goodwin T.J."/>
            <person name="Quail M.A."/>
            <person name="McQuillan J."/>
            <person name="Munro C.A."/>
            <person name="Pain A."/>
            <person name="Poulter R.T."/>
            <person name="Rajandream M.A."/>
            <person name="Renauld H."/>
            <person name="Spiering M.J."/>
            <person name="Tivey A."/>
            <person name="Gow N.A.R."/>
            <person name="Barrell B."/>
            <person name="Sullivan D.J."/>
            <person name="Berriman M."/>
        </authorList>
    </citation>
    <scope>NUCLEOTIDE SEQUENCE [LARGE SCALE GENOMIC DNA]</scope>
    <source>
        <strain>CD36 / ATCC MYA-646 / CBS 7987 / NCPF 3949 / NRRL Y-17841</strain>
    </source>
</reference>
<protein>
    <recommendedName>
        <fullName evidence="1">Vacuolar membrane protease</fullName>
        <ecNumber evidence="6">3.4.-.-</ecNumber>
    </recommendedName>
    <alternativeName>
        <fullName evidence="1">FXNA-related family protease 1</fullName>
    </alternativeName>
</protein>
<organism>
    <name type="scientific">Candida dubliniensis (strain CD36 / ATCC MYA-646 / CBS 7987 / NCPF 3949 / NRRL Y-17841)</name>
    <name type="common">Yeast</name>
    <dbReference type="NCBI Taxonomy" id="573826"/>
    <lineage>
        <taxon>Eukaryota</taxon>
        <taxon>Fungi</taxon>
        <taxon>Dikarya</taxon>
        <taxon>Ascomycota</taxon>
        <taxon>Saccharomycotina</taxon>
        <taxon>Pichiomycetes</taxon>
        <taxon>Debaryomycetaceae</taxon>
        <taxon>Candida/Lodderomyces clade</taxon>
        <taxon>Candida</taxon>
    </lineage>
</organism>
<gene>
    <name type="ORF">CD36_24500</name>
</gene>
<sequence length="930" mass="104760">MPQEEVHDTSSVSDDNLTNTGGGGSNYYNSHNQPNVFVRAIRSIFGYRKTSLTLFVILTIIFTIALSLYDNNLDLTIELPTNKLENEILKSSWLDLQNIARYPHTYGSRANDRVHDYLESRIHDIIKENPYTEYNNDGEKVLYESAKSIVSYYESNNLLVRINGSDASLPALLLSAHYDSVPSSFGVTDDGMGIASLLGVLRFFAQNEQPRRTVIFNFNNDEEFGLYGAQAFVSHPWFKQIGFFLNLEGTGAGGKAILFRGTDYGIVKYFNKVRYPYATSIFQQGFNNHLIHSETDYKVYKEAGLRGLDLAFYKPRDIYHTAEDNIKNINLKSLWHMLSNSIDFANFVSNQKINDSGKDEFAVYTSFLGYFFSSPISALVTINSVLIVLFPILSGPLLFITVRYKKWKIGTSNFLSLPLAIVLTVAIVMIVVNQGFQIANPFLPSSHPLLLVATTTSISLLIYYVFLNGVNWVSPSGDQKLITIIEISFIYWLILIYVTHGLSQNKIGDDHTGEFPFTVLFFLEATASLFGLIGWTFSRSIKQSSNDGSDEPLLTGTAERYGSDDTDEDEQEEFRHHDGNTVKHLMQHFGYDWSLQYLLIVPISSLIIFNSGWLVLDGINKSIQESFAAENLIYLLIQLFSQFWILPILPFVYKLNRFIVFGLTIFAISGVALISFLDPFNQENPLKLRFIQKVDLNKSQDSFVEVYGRKGIFSDILSDMPSVKETHTKVECEALSDGLEACSYKSALAPNVIPGKSLKDYVNVEIVNSSKIESYGLLSGEIIITAPENRMCTLYFTKKKVKAVVIYNKSKSVNNFKSIPDGFSRDSKGNYIYKDVAGIDQLVLNKLDWNKNYHIGFDWLPNIDDEVNTLSVDVECYWADLAPGIGGGDNATNAELAIPAYNELVHYSPNWVTWANREKGLVSVSLKIEV</sequence>
<keyword id="KW-0325">Glycoprotein</keyword>
<keyword id="KW-0378">Hydrolase</keyword>
<keyword id="KW-0472">Membrane</keyword>
<keyword id="KW-0479">Metal-binding</keyword>
<keyword id="KW-0482">Metalloprotease</keyword>
<keyword id="KW-0645">Protease</keyword>
<keyword id="KW-0812">Transmembrane</keyword>
<keyword id="KW-1133">Transmembrane helix</keyword>
<keyword id="KW-0926">Vacuole</keyword>
<keyword id="KW-0862">Zinc</keyword>